<feature type="chain" id="PRO_0000212761" description="Probable disease resistance protein At4g33300">
    <location>
        <begin position="1"/>
        <end position="816"/>
    </location>
</feature>
<feature type="domain" description="RPW8" evidence="3">
    <location>
        <begin position="1"/>
        <end position="149"/>
    </location>
</feature>
<feature type="domain" description="NB-ARC">
    <location>
        <begin position="191"/>
        <end position="443"/>
    </location>
</feature>
<feature type="repeat" description="LRR 1">
    <location>
        <begin position="681"/>
        <end position="704"/>
    </location>
</feature>
<feature type="repeat" description="LRR 2">
    <location>
        <begin position="705"/>
        <end position="727"/>
    </location>
</feature>
<feature type="repeat" description="LRR 3">
    <location>
        <begin position="729"/>
        <end position="751"/>
    </location>
</feature>
<feature type="repeat" description="LRR 4">
    <location>
        <begin position="753"/>
        <end position="774"/>
    </location>
</feature>
<feature type="coiled-coil region" evidence="2">
    <location>
        <begin position="95"/>
        <end position="111"/>
    </location>
</feature>
<feature type="coiled-coil region" evidence="2">
    <location>
        <begin position="399"/>
        <end position="415"/>
    </location>
</feature>
<feature type="binding site" evidence="2">
    <location>
        <begin position="207"/>
        <end position="214"/>
    </location>
    <ligand>
        <name>ATP</name>
        <dbReference type="ChEBI" id="CHEBI:30616"/>
    </ligand>
</feature>
<evidence type="ECO:0000250" key="1"/>
<evidence type="ECO:0000255" key="2"/>
<evidence type="ECO:0000255" key="3">
    <source>
        <dbReference type="PROSITE-ProRule" id="PRU00495"/>
    </source>
</evidence>
<evidence type="ECO:0000305" key="4"/>
<reference key="1">
    <citation type="journal article" date="1999" name="Nature">
        <title>Sequence and analysis of chromosome 4 of the plant Arabidopsis thaliana.</title>
        <authorList>
            <person name="Mayer K.F.X."/>
            <person name="Schueller C."/>
            <person name="Wambutt R."/>
            <person name="Murphy G."/>
            <person name="Volckaert G."/>
            <person name="Pohl T."/>
            <person name="Duesterhoeft A."/>
            <person name="Stiekema W."/>
            <person name="Entian K.-D."/>
            <person name="Terryn N."/>
            <person name="Harris B."/>
            <person name="Ansorge W."/>
            <person name="Brandt P."/>
            <person name="Grivell L.A."/>
            <person name="Rieger M."/>
            <person name="Weichselgartner M."/>
            <person name="de Simone V."/>
            <person name="Obermaier B."/>
            <person name="Mache R."/>
            <person name="Mueller M."/>
            <person name="Kreis M."/>
            <person name="Delseny M."/>
            <person name="Puigdomenech P."/>
            <person name="Watson M."/>
            <person name="Schmidtheini T."/>
            <person name="Reichert B."/>
            <person name="Portetelle D."/>
            <person name="Perez-Alonso M."/>
            <person name="Boutry M."/>
            <person name="Bancroft I."/>
            <person name="Vos P."/>
            <person name="Hoheisel J."/>
            <person name="Zimmermann W."/>
            <person name="Wedler H."/>
            <person name="Ridley P."/>
            <person name="Langham S.-A."/>
            <person name="McCullagh B."/>
            <person name="Bilham L."/>
            <person name="Robben J."/>
            <person name="van der Schueren J."/>
            <person name="Grymonprez B."/>
            <person name="Chuang Y.-J."/>
            <person name="Vandenbussche F."/>
            <person name="Braeken M."/>
            <person name="Weltjens I."/>
            <person name="Voet M."/>
            <person name="Bastiaens I."/>
            <person name="Aert R."/>
            <person name="Defoor E."/>
            <person name="Weitzenegger T."/>
            <person name="Bothe G."/>
            <person name="Ramsperger U."/>
            <person name="Hilbert H."/>
            <person name="Braun M."/>
            <person name="Holzer E."/>
            <person name="Brandt A."/>
            <person name="Peters S."/>
            <person name="van Staveren M."/>
            <person name="Dirkse W."/>
            <person name="Mooijman P."/>
            <person name="Klein Lankhorst R."/>
            <person name="Rose M."/>
            <person name="Hauf J."/>
            <person name="Koetter P."/>
            <person name="Berneiser S."/>
            <person name="Hempel S."/>
            <person name="Feldpausch M."/>
            <person name="Lamberth S."/>
            <person name="Van den Daele H."/>
            <person name="De Keyser A."/>
            <person name="Buysshaert C."/>
            <person name="Gielen J."/>
            <person name="Villarroel R."/>
            <person name="De Clercq R."/>
            <person name="van Montagu M."/>
            <person name="Rogers J."/>
            <person name="Cronin A."/>
            <person name="Quail M.A."/>
            <person name="Bray-Allen S."/>
            <person name="Clark L."/>
            <person name="Doggett J."/>
            <person name="Hall S."/>
            <person name="Kay M."/>
            <person name="Lennard N."/>
            <person name="McLay K."/>
            <person name="Mayes R."/>
            <person name="Pettett A."/>
            <person name="Rajandream M.A."/>
            <person name="Lyne M."/>
            <person name="Benes V."/>
            <person name="Rechmann S."/>
            <person name="Borkova D."/>
            <person name="Bloecker H."/>
            <person name="Scharfe M."/>
            <person name="Grimm M."/>
            <person name="Loehnert T.-H."/>
            <person name="Dose S."/>
            <person name="de Haan M."/>
            <person name="Maarse A.C."/>
            <person name="Schaefer M."/>
            <person name="Mueller-Auer S."/>
            <person name="Gabel C."/>
            <person name="Fuchs M."/>
            <person name="Fartmann B."/>
            <person name="Granderath K."/>
            <person name="Dauner D."/>
            <person name="Herzl A."/>
            <person name="Neumann S."/>
            <person name="Argiriou A."/>
            <person name="Vitale D."/>
            <person name="Liguori R."/>
            <person name="Piravandi E."/>
            <person name="Massenet O."/>
            <person name="Quigley F."/>
            <person name="Clabauld G."/>
            <person name="Muendlein A."/>
            <person name="Felber R."/>
            <person name="Schnabl S."/>
            <person name="Hiller R."/>
            <person name="Schmidt W."/>
            <person name="Lecharny A."/>
            <person name="Aubourg S."/>
            <person name="Chefdor F."/>
            <person name="Cooke R."/>
            <person name="Berger C."/>
            <person name="Monfort A."/>
            <person name="Casacuberta E."/>
            <person name="Gibbons T."/>
            <person name="Weber N."/>
            <person name="Vandenbol M."/>
            <person name="Bargues M."/>
            <person name="Terol J."/>
            <person name="Torres A."/>
            <person name="Perez-Perez A."/>
            <person name="Purnelle B."/>
            <person name="Bent E."/>
            <person name="Johnson S."/>
            <person name="Tacon D."/>
            <person name="Jesse T."/>
            <person name="Heijnen L."/>
            <person name="Schwarz S."/>
            <person name="Scholler P."/>
            <person name="Heber S."/>
            <person name="Francs P."/>
            <person name="Bielke C."/>
            <person name="Frishman D."/>
            <person name="Haase D."/>
            <person name="Lemcke K."/>
            <person name="Mewes H.-W."/>
            <person name="Stocker S."/>
            <person name="Zaccaria P."/>
            <person name="Bevan M."/>
            <person name="Wilson R.K."/>
            <person name="de la Bastide M."/>
            <person name="Habermann K."/>
            <person name="Parnell L."/>
            <person name="Dedhia N."/>
            <person name="Gnoj L."/>
            <person name="Schutz K."/>
            <person name="Huang E."/>
            <person name="Spiegel L."/>
            <person name="Sekhon M."/>
            <person name="Murray J."/>
            <person name="Sheet P."/>
            <person name="Cordes M."/>
            <person name="Abu-Threideh J."/>
            <person name="Stoneking T."/>
            <person name="Kalicki J."/>
            <person name="Graves T."/>
            <person name="Harmon G."/>
            <person name="Edwards J."/>
            <person name="Latreille P."/>
            <person name="Courtney L."/>
            <person name="Cloud J."/>
            <person name="Abbott A."/>
            <person name="Scott K."/>
            <person name="Johnson D."/>
            <person name="Minx P."/>
            <person name="Bentley D."/>
            <person name="Fulton B."/>
            <person name="Miller N."/>
            <person name="Greco T."/>
            <person name="Kemp K."/>
            <person name="Kramer J."/>
            <person name="Fulton L."/>
            <person name="Mardis E."/>
            <person name="Dante M."/>
            <person name="Pepin K."/>
            <person name="Hillier L.W."/>
            <person name="Nelson J."/>
            <person name="Spieth J."/>
            <person name="Ryan E."/>
            <person name="Andrews S."/>
            <person name="Geisel C."/>
            <person name="Layman D."/>
            <person name="Du H."/>
            <person name="Ali J."/>
            <person name="Berghoff A."/>
            <person name="Jones K."/>
            <person name="Drone K."/>
            <person name="Cotton M."/>
            <person name="Joshu C."/>
            <person name="Antonoiu B."/>
            <person name="Zidanic M."/>
            <person name="Strong C."/>
            <person name="Sun H."/>
            <person name="Lamar B."/>
            <person name="Yordan C."/>
            <person name="Ma P."/>
            <person name="Zhong J."/>
            <person name="Preston R."/>
            <person name="Vil D."/>
            <person name="Shekher M."/>
            <person name="Matero A."/>
            <person name="Shah R."/>
            <person name="Swaby I.K."/>
            <person name="O'Shaughnessy A."/>
            <person name="Rodriguez M."/>
            <person name="Hoffman J."/>
            <person name="Till S."/>
            <person name="Granat S."/>
            <person name="Shohdy N."/>
            <person name="Hasegawa A."/>
            <person name="Hameed A."/>
            <person name="Lodhi M."/>
            <person name="Johnson A."/>
            <person name="Chen E."/>
            <person name="Marra M.A."/>
            <person name="Martienssen R."/>
            <person name="McCombie W.R."/>
        </authorList>
    </citation>
    <scope>NUCLEOTIDE SEQUENCE [LARGE SCALE GENOMIC DNA]</scope>
    <source>
        <strain>cv. Columbia</strain>
    </source>
</reference>
<reference key="2">
    <citation type="journal article" date="2017" name="Plant J.">
        <title>Araport11: a complete reannotation of the Arabidopsis thaliana reference genome.</title>
        <authorList>
            <person name="Cheng C.Y."/>
            <person name="Krishnakumar V."/>
            <person name="Chan A.P."/>
            <person name="Thibaud-Nissen F."/>
            <person name="Schobel S."/>
            <person name="Town C.D."/>
        </authorList>
    </citation>
    <scope>GENOME REANNOTATION</scope>
    <source>
        <strain>cv. Columbia</strain>
    </source>
</reference>
<reference key="3">
    <citation type="journal article" date="2009" name="DNA Res.">
        <title>Analysis of multiple occurrences of alternative splicing events in Arabidopsis thaliana using novel sequenced full-length cDNAs.</title>
        <authorList>
            <person name="Iida K."/>
            <person name="Fukami-Kobayashi K."/>
            <person name="Toyoda A."/>
            <person name="Sakaki Y."/>
            <person name="Kobayashi M."/>
            <person name="Seki M."/>
            <person name="Shinozaki K."/>
        </authorList>
    </citation>
    <scope>NUCLEOTIDE SEQUENCE [LARGE SCALE MRNA]</scope>
    <source>
        <strain>cv. Columbia</strain>
    </source>
</reference>
<reference key="4">
    <citation type="submission" date="2005-03" db="EMBL/GenBank/DDBJ databases">
        <title>Large-scale analysis of RIKEN Arabidopsis full-length (RAFL) cDNAs.</title>
        <authorList>
            <person name="Totoki Y."/>
            <person name="Seki M."/>
            <person name="Ishida J."/>
            <person name="Nakajima M."/>
            <person name="Enju A."/>
            <person name="Kamiya A."/>
            <person name="Narusaka M."/>
            <person name="Shin-i T."/>
            <person name="Nakagawa M."/>
            <person name="Sakamoto N."/>
            <person name="Oishi K."/>
            <person name="Kohara Y."/>
            <person name="Kobayashi M."/>
            <person name="Toyoda A."/>
            <person name="Sakaki Y."/>
            <person name="Sakurai T."/>
            <person name="Iida K."/>
            <person name="Akiyama K."/>
            <person name="Satou M."/>
            <person name="Toyoda T."/>
            <person name="Konagaya A."/>
            <person name="Carninci P."/>
            <person name="Kawai J."/>
            <person name="Hayashizaki Y."/>
            <person name="Shinozaki K."/>
        </authorList>
    </citation>
    <scope>NUCLEOTIDE SEQUENCE [LARGE SCALE MRNA] OF 451-816</scope>
    <source>
        <strain>cv. Columbia</strain>
    </source>
</reference>
<accession>Q9SZA7</accession>
<accession>B9DG00</accession>
<accession>Q56WJ3</accession>
<gene>
    <name type="ordered locus">At4g33300</name>
    <name type="ORF">F17M5.60</name>
</gene>
<comment type="function">
    <text evidence="1">Probable disease resistance protein.</text>
</comment>
<comment type="domain">
    <text evidence="1">The LRR repeats probably act as specificity determinant of pathogen recognition.</text>
</comment>
<comment type="similarity">
    <text evidence="4">Belongs to the disease resistance NB-LRR family.</text>
</comment>
<comment type="sequence caution" evidence="4">
    <conflict type="erroneous gene model prediction">
        <sequence resource="EMBL-CDS" id="CAB38788"/>
    </conflict>
</comment>
<comment type="sequence caution" evidence="4">
    <conflict type="erroneous gene model prediction">
        <sequence resource="EMBL-CDS" id="CAB80047"/>
    </conflict>
</comment>
<comment type="online information" name="NIB-LRRS">
    <link uri="http://niblrrs.ucdavis.edu"/>
    <text>Functional and comparative genomics of disease resistance gene homologs</text>
</comment>
<keyword id="KW-0067">ATP-binding</keyword>
<keyword id="KW-0175">Coiled coil</keyword>
<keyword id="KW-0433">Leucine-rich repeat</keyword>
<keyword id="KW-0547">Nucleotide-binding</keyword>
<keyword id="KW-0611">Plant defense</keyword>
<keyword id="KW-1185">Reference proteome</keyword>
<keyword id="KW-0677">Repeat</keyword>
<sequence length="816" mass="91819">MAITDFFAGEIATELLKQLFTISTTAWRYKNTAKQLLTLIDSIRPTIKEIQYSGVELPAHRQAQIGMLFDTLEKGKKLTDKVLSSKRWNLYRQLTLARKMEKLEKTISNFLKNEVFTHILADVHHLRADTSVRLDRVDMSLDRVIQQVGSMKIGGGGLISEAMKRAEAMEIETNDDSEKFGVGLELGKVKVKKMMFESQGGVFGISGMGGVGKTTLAKELQRDHEVQCHFENRILFLTVSQSPLLEELRELIWGFLSGCEAGNPVPDCNFPFDGARKLVILDDVWTTQALDRLTSFKFPGCTTLVVSRSKLTEPKFTYDVEVLSEDEAISLFCLCAFGQKSIPLGFCKDLVKQVANECKGLPLALKVTGASLNGKPEMYWKGVLQRLSKGEPADDSHESRLLRQMEASLDNLDQTTKDCFLDLGAFPEDRKIPLDVLINIWIELHDIDEGNAFAILVDLSHKNLLTLGKDPRLGSLYASHYDIFVTQHDVLRDLALHLSNAGKVNRRKRLLMPKRELDLPGDWERNNDEHYIAQIVSIHTGEMNEMQWFDMEFPKAEILILNFSSDKYVLPPFISKMSRLKVLVIINNGMSPAVLHDFSIFAHLSKLRSLWLERVHVPQLSNSTTPLKNLHKMSLILCKINKSFDQTGLDVADIFPKLGDLTIDHCDDLVALPSSICGLTSLSCLSITNCPRLGELPKNLSKLQALEILRLYACPELKTLPGEICELPGLKYLDISQCVSLSCLPEEIGKLKKLEKIDMRECCFSDRPSSAVSLKSLRHVICDTDVAFMWEEVEKAVPGLKIEAAEKCFSLDWLDE</sequence>
<dbReference type="EMBL" id="AL035678">
    <property type="protein sequence ID" value="CAB38788.1"/>
    <property type="status" value="ALT_SEQ"/>
    <property type="molecule type" value="Genomic_DNA"/>
</dbReference>
<dbReference type="EMBL" id="AL161583">
    <property type="protein sequence ID" value="CAB80047.1"/>
    <property type="status" value="ALT_SEQ"/>
    <property type="molecule type" value="Genomic_DNA"/>
</dbReference>
<dbReference type="EMBL" id="CP002687">
    <property type="protein sequence ID" value="AEE86203.1"/>
    <property type="molecule type" value="Genomic_DNA"/>
</dbReference>
<dbReference type="EMBL" id="CP002687">
    <property type="protein sequence ID" value="AEE86204.1"/>
    <property type="molecule type" value="Genomic_DNA"/>
</dbReference>
<dbReference type="EMBL" id="AK316970">
    <property type="protein sequence ID" value="BAH19667.1"/>
    <property type="molecule type" value="mRNA"/>
</dbReference>
<dbReference type="EMBL" id="AK222047">
    <property type="protein sequence ID" value="BAD94804.1"/>
    <property type="molecule type" value="mRNA"/>
</dbReference>
<dbReference type="PIR" id="T05981">
    <property type="entry name" value="T05981"/>
</dbReference>
<dbReference type="RefSeq" id="NP_001031781.1">
    <property type="nucleotide sequence ID" value="NM_001036704.2"/>
</dbReference>
<dbReference type="RefSeq" id="NP_001320123.1">
    <property type="nucleotide sequence ID" value="NM_001342211.1"/>
</dbReference>
<dbReference type="SMR" id="Q9SZA7"/>
<dbReference type="FunCoup" id="Q9SZA7">
    <property type="interactions" value="880"/>
</dbReference>
<dbReference type="STRING" id="3702.Q9SZA7"/>
<dbReference type="iPTMnet" id="Q9SZA7"/>
<dbReference type="PaxDb" id="3702-AT4G33300.2"/>
<dbReference type="ProteomicsDB" id="224326"/>
<dbReference type="EnsemblPlants" id="AT4G33300.1">
    <property type="protein sequence ID" value="AT4G33300.1"/>
    <property type="gene ID" value="AT4G33300"/>
</dbReference>
<dbReference type="EnsemblPlants" id="AT4G33300.2">
    <property type="protein sequence ID" value="AT4G33300.2"/>
    <property type="gene ID" value="AT4G33300"/>
</dbReference>
<dbReference type="GeneID" id="829466"/>
<dbReference type="Gramene" id="AT4G33300.1">
    <property type="protein sequence ID" value="AT4G33300.1"/>
    <property type="gene ID" value="AT4G33300"/>
</dbReference>
<dbReference type="Gramene" id="AT4G33300.2">
    <property type="protein sequence ID" value="AT4G33300.2"/>
    <property type="gene ID" value="AT4G33300"/>
</dbReference>
<dbReference type="KEGG" id="ath:AT4G33300"/>
<dbReference type="Araport" id="AT4G33300"/>
<dbReference type="TAIR" id="AT4G33300">
    <property type="gene designation" value="ADR1-L1"/>
</dbReference>
<dbReference type="eggNOG" id="ENOG502QSSA">
    <property type="taxonomic scope" value="Eukaryota"/>
</dbReference>
<dbReference type="HOGENOM" id="CLU_012216_1_0_1"/>
<dbReference type="InParanoid" id="Q9SZA7"/>
<dbReference type="OMA" id="MAASIEC"/>
<dbReference type="PHI-base" id="PHI:2389"/>
<dbReference type="PRO" id="PR:Q9SZA7"/>
<dbReference type="Proteomes" id="UP000006548">
    <property type="component" value="Chromosome 4"/>
</dbReference>
<dbReference type="ExpressionAtlas" id="Q9SZA7">
    <property type="expression patterns" value="baseline and differential"/>
</dbReference>
<dbReference type="GO" id="GO:0048046">
    <property type="term" value="C:apoplast"/>
    <property type="evidence" value="ECO:0007005"/>
    <property type="project" value="TAIR"/>
</dbReference>
<dbReference type="GO" id="GO:0043531">
    <property type="term" value="F:ADP binding"/>
    <property type="evidence" value="ECO:0007669"/>
    <property type="project" value="InterPro"/>
</dbReference>
<dbReference type="GO" id="GO:0005524">
    <property type="term" value="F:ATP binding"/>
    <property type="evidence" value="ECO:0007669"/>
    <property type="project" value="UniProtKB-KW"/>
</dbReference>
<dbReference type="GO" id="GO:0042742">
    <property type="term" value="P:defense response to bacterium"/>
    <property type="evidence" value="ECO:0000316"/>
    <property type="project" value="TAIR"/>
</dbReference>
<dbReference type="FunFam" id="1.10.10.10:FF:001043">
    <property type="entry name" value="Probable disease resistance protein At4g33300"/>
    <property type="match status" value="1"/>
</dbReference>
<dbReference type="FunFam" id="3.40.50.300:FF:003793">
    <property type="entry name" value="Probable disease resistance protein At5g66900"/>
    <property type="match status" value="1"/>
</dbReference>
<dbReference type="FunFam" id="3.80.10.10:FF:001050">
    <property type="entry name" value="Probable disease resistance protein At5g66900"/>
    <property type="match status" value="1"/>
</dbReference>
<dbReference type="FunFam" id="1.10.8.430:FF:000003">
    <property type="entry name" value="Probable disease resistance protein At5g66910"/>
    <property type="match status" value="1"/>
</dbReference>
<dbReference type="Gene3D" id="1.10.8.430">
    <property type="entry name" value="Helical domain of apoptotic protease-activating factors"/>
    <property type="match status" value="1"/>
</dbReference>
<dbReference type="Gene3D" id="3.40.50.300">
    <property type="entry name" value="P-loop containing nucleotide triphosphate hydrolases"/>
    <property type="match status" value="1"/>
</dbReference>
<dbReference type="Gene3D" id="3.80.10.10">
    <property type="entry name" value="Ribonuclease Inhibitor"/>
    <property type="match status" value="1"/>
</dbReference>
<dbReference type="Gene3D" id="1.10.10.10">
    <property type="entry name" value="Winged helix-like DNA-binding domain superfamily/Winged helix DNA-binding domain"/>
    <property type="match status" value="1"/>
</dbReference>
<dbReference type="InterPro" id="IPR042197">
    <property type="entry name" value="Apaf_helical"/>
</dbReference>
<dbReference type="InterPro" id="IPR032675">
    <property type="entry name" value="LRR_dom_sf"/>
</dbReference>
<dbReference type="InterPro" id="IPR056845">
    <property type="entry name" value="LRR_Zer-1"/>
</dbReference>
<dbReference type="InterPro" id="IPR002182">
    <property type="entry name" value="NB-ARC"/>
</dbReference>
<dbReference type="InterPro" id="IPR027417">
    <property type="entry name" value="P-loop_NTPase"/>
</dbReference>
<dbReference type="InterPro" id="IPR008808">
    <property type="entry name" value="Powdery_mildew-R_dom"/>
</dbReference>
<dbReference type="InterPro" id="IPR036388">
    <property type="entry name" value="WH-like_DNA-bd_sf"/>
</dbReference>
<dbReference type="PANTHER" id="PTHR36766">
    <property type="entry name" value="PLANT BROAD-SPECTRUM MILDEW RESISTANCE PROTEIN RPW8"/>
    <property type="match status" value="1"/>
</dbReference>
<dbReference type="PANTHER" id="PTHR36766:SF30">
    <property type="entry name" value="TIR-NBS TYPE DISEASE RESISTANCE PROTEIN-RELATED"/>
    <property type="match status" value="1"/>
</dbReference>
<dbReference type="Pfam" id="PF25013">
    <property type="entry name" value="LRR_Zer-1"/>
    <property type="match status" value="1"/>
</dbReference>
<dbReference type="Pfam" id="PF00931">
    <property type="entry name" value="NB-ARC"/>
    <property type="match status" value="1"/>
</dbReference>
<dbReference type="Pfam" id="PF05659">
    <property type="entry name" value="RPW8"/>
    <property type="match status" value="1"/>
</dbReference>
<dbReference type="PRINTS" id="PR00364">
    <property type="entry name" value="DISEASERSIST"/>
</dbReference>
<dbReference type="SUPFAM" id="SSF52058">
    <property type="entry name" value="L domain-like"/>
    <property type="match status" value="1"/>
</dbReference>
<dbReference type="SUPFAM" id="SSF52540">
    <property type="entry name" value="P-loop containing nucleoside triphosphate hydrolases"/>
    <property type="match status" value="1"/>
</dbReference>
<dbReference type="PROSITE" id="PS51153">
    <property type="entry name" value="RPW8"/>
    <property type="match status" value="1"/>
</dbReference>
<proteinExistence type="evidence at transcript level"/>
<organism>
    <name type="scientific">Arabidopsis thaliana</name>
    <name type="common">Mouse-ear cress</name>
    <dbReference type="NCBI Taxonomy" id="3702"/>
    <lineage>
        <taxon>Eukaryota</taxon>
        <taxon>Viridiplantae</taxon>
        <taxon>Streptophyta</taxon>
        <taxon>Embryophyta</taxon>
        <taxon>Tracheophyta</taxon>
        <taxon>Spermatophyta</taxon>
        <taxon>Magnoliopsida</taxon>
        <taxon>eudicotyledons</taxon>
        <taxon>Gunneridae</taxon>
        <taxon>Pentapetalae</taxon>
        <taxon>rosids</taxon>
        <taxon>malvids</taxon>
        <taxon>Brassicales</taxon>
        <taxon>Brassicaceae</taxon>
        <taxon>Camelineae</taxon>
        <taxon>Arabidopsis</taxon>
    </lineage>
</organism>
<name>DRL29_ARATH</name>
<protein>
    <recommendedName>
        <fullName>Probable disease resistance protein At4g33300</fullName>
    </recommendedName>
</protein>